<evidence type="ECO:0000255" key="1">
    <source>
        <dbReference type="HAMAP-Rule" id="MF_00106"/>
    </source>
</evidence>
<organism>
    <name type="scientific">Streptococcus agalactiae serotype Ia (strain ATCC 27591 / A909 / CDC SS700)</name>
    <dbReference type="NCBI Taxonomy" id="205921"/>
    <lineage>
        <taxon>Bacteria</taxon>
        <taxon>Bacillati</taxon>
        <taxon>Bacillota</taxon>
        <taxon>Bacilli</taxon>
        <taxon>Lactobacillales</taxon>
        <taxon>Streptococcaceae</taxon>
        <taxon>Streptococcus</taxon>
    </lineage>
</organism>
<gene>
    <name evidence="1" type="primary">uxuA</name>
    <name type="ordered locus">SAK_0828</name>
</gene>
<protein>
    <recommendedName>
        <fullName evidence="1">Mannonate dehydratase</fullName>
        <ecNumber evidence="1">4.2.1.8</ecNumber>
    </recommendedName>
    <alternativeName>
        <fullName evidence="1">D-mannonate hydro-lyase</fullName>
    </alternativeName>
</protein>
<feature type="chain" id="PRO_0000231059" description="Mannonate dehydratase">
    <location>
        <begin position="1"/>
        <end position="348"/>
    </location>
</feature>
<accession>Q3K203</accession>
<proteinExistence type="inferred from homology"/>
<comment type="function">
    <text evidence="1">Catalyzes the dehydration of D-mannonate.</text>
</comment>
<comment type="catalytic activity">
    <reaction evidence="1">
        <text>D-mannonate = 2-dehydro-3-deoxy-D-gluconate + H2O</text>
        <dbReference type="Rhea" id="RHEA:20097"/>
        <dbReference type="ChEBI" id="CHEBI:15377"/>
        <dbReference type="ChEBI" id="CHEBI:17767"/>
        <dbReference type="ChEBI" id="CHEBI:57990"/>
        <dbReference type="EC" id="4.2.1.8"/>
    </reaction>
</comment>
<comment type="cofactor">
    <cofactor evidence="1">
        <name>Fe(2+)</name>
        <dbReference type="ChEBI" id="CHEBI:29033"/>
    </cofactor>
    <cofactor evidence="1">
        <name>Mn(2+)</name>
        <dbReference type="ChEBI" id="CHEBI:29035"/>
    </cofactor>
</comment>
<comment type="pathway">
    <text evidence="1">Carbohydrate metabolism; pentose and glucuronate interconversion.</text>
</comment>
<comment type="similarity">
    <text evidence="1">Belongs to the mannonate dehydratase family.</text>
</comment>
<name>UXUA_STRA1</name>
<dbReference type="EC" id="4.2.1.8" evidence="1"/>
<dbReference type="EMBL" id="CP000114">
    <property type="protein sequence ID" value="ABA45816.1"/>
    <property type="molecule type" value="Genomic_DNA"/>
</dbReference>
<dbReference type="RefSeq" id="WP_000426046.1">
    <property type="nucleotide sequence ID" value="NC_007432.1"/>
</dbReference>
<dbReference type="SMR" id="Q3K203"/>
<dbReference type="KEGG" id="sak:SAK_0828"/>
<dbReference type="HOGENOM" id="CLU_058621_1_0_9"/>
<dbReference type="UniPathway" id="UPA00246"/>
<dbReference type="GO" id="GO:0008198">
    <property type="term" value="F:ferrous iron binding"/>
    <property type="evidence" value="ECO:0007669"/>
    <property type="project" value="TreeGrafter"/>
</dbReference>
<dbReference type="GO" id="GO:0030145">
    <property type="term" value="F:manganese ion binding"/>
    <property type="evidence" value="ECO:0007669"/>
    <property type="project" value="TreeGrafter"/>
</dbReference>
<dbReference type="GO" id="GO:0008927">
    <property type="term" value="F:mannonate dehydratase activity"/>
    <property type="evidence" value="ECO:0007669"/>
    <property type="project" value="UniProtKB-UniRule"/>
</dbReference>
<dbReference type="GO" id="GO:0042840">
    <property type="term" value="P:D-glucuronate catabolic process"/>
    <property type="evidence" value="ECO:0007669"/>
    <property type="project" value="TreeGrafter"/>
</dbReference>
<dbReference type="Gene3D" id="3.20.20.150">
    <property type="entry name" value="Divalent-metal-dependent TIM barrel enzymes"/>
    <property type="match status" value="1"/>
</dbReference>
<dbReference type="HAMAP" id="MF_00106">
    <property type="entry name" value="UxuA"/>
    <property type="match status" value="1"/>
</dbReference>
<dbReference type="InterPro" id="IPR004628">
    <property type="entry name" value="Man_deHydtase"/>
</dbReference>
<dbReference type="InterPro" id="IPR036237">
    <property type="entry name" value="Xyl_isomerase-like_sf"/>
</dbReference>
<dbReference type="NCBIfam" id="NF003027">
    <property type="entry name" value="PRK03906.1"/>
    <property type="match status" value="2"/>
</dbReference>
<dbReference type="PANTHER" id="PTHR30387">
    <property type="entry name" value="MANNONATE DEHYDRATASE"/>
    <property type="match status" value="1"/>
</dbReference>
<dbReference type="PANTHER" id="PTHR30387:SF2">
    <property type="entry name" value="MANNONATE DEHYDRATASE"/>
    <property type="match status" value="1"/>
</dbReference>
<dbReference type="Pfam" id="PF03786">
    <property type="entry name" value="UxuA"/>
    <property type="match status" value="1"/>
</dbReference>
<dbReference type="PIRSF" id="PIRSF016049">
    <property type="entry name" value="Man_dehyd"/>
    <property type="match status" value="1"/>
</dbReference>
<dbReference type="SUPFAM" id="SSF51658">
    <property type="entry name" value="Xylose isomerase-like"/>
    <property type="match status" value="1"/>
</dbReference>
<sequence>MEMSFRWYGEDDPVTLENIGQIPTMKGIVTAIYDVPVGEVWSRERIQQLKEKVEAAGLKISVIESVPVHEDIKLGRPTRDLLIDNYIQTVKNLAAEGIDTICYNFMPVFDWTRTDLAYQYPDGSTALIFDETVSKKMDPVNGELSLPGWDASYSKEEMKAIMDAYAEIDEEKLWENLTYFIKRIIPEAEAVGVKMAIHPDDPPYSIFGLPRIITGLEAIERFVKLYDSKSNGITLCVGSYASDPQNDVLEISRRAFELERVNFVHARNIKLGDGKSFKESAHPSEYGSIDMYEVIKLCHEFGFEGAIRPDHGRMIWGETGRPGYGLYDRALGATYLSGLYEAVIKGSK</sequence>
<reference key="1">
    <citation type="journal article" date="2005" name="Proc. Natl. Acad. Sci. U.S.A.">
        <title>Genome analysis of multiple pathogenic isolates of Streptococcus agalactiae: implications for the microbial 'pan-genome'.</title>
        <authorList>
            <person name="Tettelin H."/>
            <person name="Masignani V."/>
            <person name="Cieslewicz M.J."/>
            <person name="Donati C."/>
            <person name="Medini D."/>
            <person name="Ward N.L."/>
            <person name="Angiuoli S.V."/>
            <person name="Crabtree J."/>
            <person name="Jones A.L."/>
            <person name="Durkin A.S."/>
            <person name="DeBoy R.T."/>
            <person name="Davidsen T.M."/>
            <person name="Mora M."/>
            <person name="Scarselli M."/>
            <person name="Margarit y Ros I."/>
            <person name="Peterson J.D."/>
            <person name="Hauser C.R."/>
            <person name="Sundaram J.P."/>
            <person name="Nelson W.C."/>
            <person name="Madupu R."/>
            <person name="Brinkac L.M."/>
            <person name="Dodson R.J."/>
            <person name="Rosovitz M.J."/>
            <person name="Sullivan S.A."/>
            <person name="Daugherty S.C."/>
            <person name="Haft D.H."/>
            <person name="Selengut J."/>
            <person name="Gwinn M.L."/>
            <person name="Zhou L."/>
            <person name="Zafar N."/>
            <person name="Khouri H."/>
            <person name="Radune D."/>
            <person name="Dimitrov G."/>
            <person name="Watkins K."/>
            <person name="O'Connor K.J."/>
            <person name="Smith S."/>
            <person name="Utterback T.R."/>
            <person name="White O."/>
            <person name="Rubens C.E."/>
            <person name="Grandi G."/>
            <person name="Madoff L.C."/>
            <person name="Kasper D.L."/>
            <person name="Telford J.L."/>
            <person name="Wessels M.R."/>
            <person name="Rappuoli R."/>
            <person name="Fraser C.M."/>
        </authorList>
    </citation>
    <scope>NUCLEOTIDE SEQUENCE [LARGE SCALE GENOMIC DNA]</scope>
    <source>
        <strain>ATCC 27591 / A909 / CDC SS700</strain>
    </source>
</reference>
<keyword id="KW-0408">Iron</keyword>
<keyword id="KW-0456">Lyase</keyword>
<keyword id="KW-0464">Manganese</keyword>